<sequence>MAKGIMLHEVGEQVDQYFLIKSSTKGIASNGKPFLTLMLQDQSGDIEAKLWDAKPTDETTYAAQTIVKVIGDVHHYRGRNQLKLRNIRPAGENENVSIDDFLETAPIPKNEMMETVTQYIFEMKNPNIQRITRHLVKKYAAEFMDYPAAAKNHHEFVSGLAYHVVSMLNLAKAIADLYPSLDRDLLYAGVILHDLGKVKELSGPVSTTYTVEGNLLGHISIMVTELSKAAEELQIDAEEVLILKHLILSHHGKAEWGSPKPPMVKEAEILHYIDNLDAKMIMMDRALERVKPGEYTERVFALENRSFYKPTFHQ</sequence>
<dbReference type="EC" id="3.1.-.-" evidence="1"/>
<dbReference type="EMBL" id="CP000560">
    <property type="protein sequence ID" value="ABS73381.1"/>
    <property type="molecule type" value="Genomic_DNA"/>
</dbReference>
<dbReference type="RefSeq" id="WP_012117206.1">
    <property type="nucleotide sequence ID" value="NC_009725.2"/>
</dbReference>
<dbReference type="SMR" id="A7Z305"/>
<dbReference type="GeneID" id="93080151"/>
<dbReference type="KEGG" id="bay:RBAM_010170"/>
<dbReference type="HOGENOM" id="CLU_056349_2_0_9"/>
<dbReference type="Proteomes" id="UP000001120">
    <property type="component" value="Chromosome"/>
</dbReference>
<dbReference type="GO" id="GO:0000175">
    <property type="term" value="F:3'-5'-RNA exonuclease activity"/>
    <property type="evidence" value="ECO:0007669"/>
    <property type="project" value="UniProtKB-UniRule"/>
</dbReference>
<dbReference type="GO" id="GO:0031125">
    <property type="term" value="P:rRNA 3'-end processing"/>
    <property type="evidence" value="ECO:0007669"/>
    <property type="project" value="TreeGrafter"/>
</dbReference>
<dbReference type="CDD" id="cd00077">
    <property type="entry name" value="HDc"/>
    <property type="match status" value="1"/>
</dbReference>
<dbReference type="CDD" id="cd04492">
    <property type="entry name" value="YhaM_OBF_like"/>
    <property type="match status" value="1"/>
</dbReference>
<dbReference type="FunFam" id="1.10.3210.10:FF:000008">
    <property type="entry name" value="3'-5' exoribonuclease YhaM"/>
    <property type="match status" value="1"/>
</dbReference>
<dbReference type="Gene3D" id="1.10.3210.10">
    <property type="entry name" value="Hypothetical protein af1432"/>
    <property type="match status" value="1"/>
</dbReference>
<dbReference type="Gene3D" id="2.40.50.140">
    <property type="entry name" value="Nucleic acid-binding proteins"/>
    <property type="match status" value="1"/>
</dbReference>
<dbReference type="HAMAP" id="MF_01427">
    <property type="entry name" value="3_5_Exoribonuc_YhaM"/>
    <property type="match status" value="1"/>
</dbReference>
<dbReference type="InterPro" id="IPR020873">
    <property type="entry name" value="3'-5'_exoribonuclease_YhaM"/>
</dbReference>
<dbReference type="InterPro" id="IPR003607">
    <property type="entry name" value="HD/PDEase_dom"/>
</dbReference>
<dbReference type="InterPro" id="IPR006674">
    <property type="entry name" value="HD_domain"/>
</dbReference>
<dbReference type="InterPro" id="IPR012340">
    <property type="entry name" value="NA-bd_OB-fold"/>
</dbReference>
<dbReference type="InterPro" id="IPR050798">
    <property type="entry name" value="YhaM_exoribonuc/phosphodiest"/>
</dbReference>
<dbReference type="NCBIfam" id="NF010007">
    <property type="entry name" value="PRK13480.1"/>
    <property type="match status" value="1"/>
</dbReference>
<dbReference type="PANTHER" id="PTHR37294">
    <property type="entry name" value="3'-5' EXORIBONUCLEASE YHAM"/>
    <property type="match status" value="1"/>
</dbReference>
<dbReference type="PANTHER" id="PTHR37294:SF1">
    <property type="entry name" value="3'-5' EXORIBONUCLEASE YHAM"/>
    <property type="match status" value="1"/>
</dbReference>
<dbReference type="Pfam" id="PF01966">
    <property type="entry name" value="HD"/>
    <property type="match status" value="1"/>
</dbReference>
<dbReference type="SMART" id="SM00471">
    <property type="entry name" value="HDc"/>
    <property type="match status" value="1"/>
</dbReference>
<dbReference type="SUPFAM" id="SSF109604">
    <property type="entry name" value="HD-domain/PDEase-like"/>
    <property type="match status" value="1"/>
</dbReference>
<dbReference type="PROSITE" id="PS51831">
    <property type="entry name" value="HD"/>
    <property type="match status" value="1"/>
</dbReference>
<reference key="1">
    <citation type="journal article" date="2007" name="Nat. Biotechnol.">
        <title>Comparative analysis of the complete genome sequence of the plant growth-promoting bacterium Bacillus amyloliquefaciens FZB42.</title>
        <authorList>
            <person name="Chen X.H."/>
            <person name="Koumoutsi A."/>
            <person name="Scholz R."/>
            <person name="Eisenreich A."/>
            <person name="Schneider K."/>
            <person name="Heinemeyer I."/>
            <person name="Morgenstern B."/>
            <person name="Voss B."/>
            <person name="Hess W.R."/>
            <person name="Reva O."/>
            <person name="Junge H."/>
            <person name="Voigt B."/>
            <person name="Jungblut P.R."/>
            <person name="Vater J."/>
            <person name="Suessmuth R."/>
            <person name="Liesegang H."/>
            <person name="Strittmatter A."/>
            <person name="Gottschalk G."/>
            <person name="Borriss R."/>
        </authorList>
    </citation>
    <scope>NUCLEOTIDE SEQUENCE [LARGE SCALE GENOMIC DNA]</scope>
    <source>
        <strain>DSM 23117 / BGSC 10A6 / LMG 26770 / FZB42</strain>
    </source>
</reference>
<accession>A7Z305</accession>
<evidence type="ECO:0000255" key="1">
    <source>
        <dbReference type="HAMAP-Rule" id="MF_01427"/>
    </source>
</evidence>
<evidence type="ECO:0000255" key="2">
    <source>
        <dbReference type="PROSITE-ProRule" id="PRU01175"/>
    </source>
</evidence>
<feature type="chain" id="PRO_1000024347" description="3'-5' exoribonuclease YhaM">
    <location>
        <begin position="1"/>
        <end position="314"/>
    </location>
</feature>
<feature type="domain" description="HD" evidence="2">
    <location>
        <begin position="163"/>
        <end position="279"/>
    </location>
</feature>
<protein>
    <recommendedName>
        <fullName evidence="1">3'-5' exoribonuclease YhaM</fullName>
        <ecNumber evidence="1">3.1.-.-</ecNumber>
    </recommendedName>
</protein>
<proteinExistence type="inferred from homology"/>
<comment type="function">
    <text evidence="1">Shows a 3'-5' exoribonuclease activity.</text>
</comment>
<comment type="similarity">
    <text evidence="1">Belongs to the YhaM family.</text>
</comment>
<name>YHAM_BACVZ</name>
<gene>
    <name evidence="1" type="primary">yhaM</name>
    <name type="ordered locus">RBAM_010170</name>
</gene>
<organism>
    <name type="scientific">Bacillus velezensis (strain DSM 23117 / BGSC 10A6 / LMG 26770 / FZB42)</name>
    <name type="common">Bacillus amyloliquefaciens subsp. plantarum</name>
    <dbReference type="NCBI Taxonomy" id="326423"/>
    <lineage>
        <taxon>Bacteria</taxon>
        <taxon>Bacillati</taxon>
        <taxon>Bacillota</taxon>
        <taxon>Bacilli</taxon>
        <taxon>Bacillales</taxon>
        <taxon>Bacillaceae</taxon>
        <taxon>Bacillus</taxon>
        <taxon>Bacillus amyloliquefaciens group</taxon>
    </lineage>
</organism>
<keyword id="KW-0269">Exonuclease</keyword>
<keyword id="KW-0378">Hydrolase</keyword>
<keyword id="KW-0540">Nuclease</keyword>